<evidence type="ECO:0000255" key="1">
    <source>
        <dbReference type="HAMAP-Rule" id="MF_00098"/>
    </source>
</evidence>
<keyword id="KW-0030">Aminoacyl-tRNA synthetase</keyword>
<keyword id="KW-0067">ATP-binding</keyword>
<keyword id="KW-0963">Cytoplasm</keyword>
<keyword id="KW-0436">Ligase</keyword>
<keyword id="KW-0479">Metal-binding</keyword>
<keyword id="KW-0547">Nucleotide-binding</keyword>
<keyword id="KW-0648">Protein biosynthesis</keyword>
<keyword id="KW-1185">Reference proteome</keyword>
<keyword id="KW-0694">RNA-binding</keyword>
<keyword id="KW-0820">tRNA-binding</keyword>
<keyword id="KW-0862">Zinc</keyword>
<reference key="1">
    <citation type="journal article" date="2002" name="Nature">
        <title>Comparison of the genomes of two Xanthomonas pathogens with differing host specificities.</title>
        <authorList>
            <person name="da Silva A.C.R."/>
            <person name="Ferro J.A."/>
            <person name="Reinach F.C."/>
            <person name="Farah C.S."/>
            <person name="Furlan L.R."/>
            <person name="Quaggio R.B."/>
            <person name="Monteiro-Vitorello C.B."/>
            <person name="Van Sluys M.A."/>
            <person name="Almeida N.F. Jr."/>
            <person name="Alves L.M.C."/>
            <person name="do Amaral A.M."/>
            <person name="Bertolini M.C."/>
            <person name="Camargo L.E.A."/>
            <person name="Camarotte G."/>
            <person name="Cannavan F."/>
            <person name="Cardozo J."/>
            <person name="Chambergo F."/>
            <person name="Ciapina L.P."/>
            <person name="Cicarelli R.M.B."/>
            <person name="Coutinho L.L."/>
            <person name="Cursino-Santos J.R."/>
            <person name="El-Dorry H."/>
            <person name="Faria J.B."/>
            <person name="Ferreira A.J.S."/>
            <person name="Ferreira R.C.C."/>
            <person name="Ferro M.I.T."/>
            <person name="Formighieri E.F."/>
            <person name="Franco M.C."/>
            <person name="Greggio C.C."/>
            <person name="Gruber A."/>
            <person name="Katsuyama A.M."/>
            <person name="Kishi L.T."/>
            <person name="Leite R.P."/>
            <person name="Lemos E.G.M."/>
            <person name="Lemos M.V.F."/>
            <person name="Locali E.C."/>
            <person name="Machado M.A."/>
            <person name="Madeira A.M.B.N."/>
            <person name="Martinez-Rossi N.M."/>
            <person name="Martins E.C."/>
            <person name="Meidanis J."/>
            <person name="Menck C.F.M."/>
            <person name="Miyaki C.Y."/>
            <person name="Moon D.H."/>
            <person name="Moreira L.M."/>
            <person name="Novo M.T.M."/>
            <person name="Okura V.K."/>
            <person name="Oliveira M.C."/>
            <person name="Oliveira V.R."/>
            <person name="Pereira H.A."/>
            <person name="Rossi A."/>
            <person name="Sena J.A.D."/>
            <person name="Silva C."/>
            <person name="de Souza R.F."/>
            <person name="Spinola L.A.F."/>
            <person name="Takita M.A."/>
            <person name="Tamura R.E."/>
            <person name="Teixeira E.C."/>
            <person name="Tezza R.I.D."/>
            <person name="Trindade dos Santos M."/>
            <person name="Truffi D."/>
            <person name="Tsai S.M."/>
            <person name="White F.F."/>
            <person name="Setubal J.C."/>
            <person name="Kitajima J.P."/>
        </authorList>
    </citation>
    <scope>NUCLEOTIDE SEQUENCE [LARGE SCALE GENOMIC DNA]</scope>
    <source>
        <strain>ATCC 33913 / DSM 3586 / NCPPB 528 / LMG 568 / P 25</strain>
    </source>
</reference>
<dbReference type="EC" id="6.1.1.10" evidence="1"/>
<dbReference type="EMBL" id="AE008922">
    <property type="protein sequence ID" value="AAM40637.1"/>
    <property type="molecule type" value="Genomic_DNA"/>
</dbReference>
<dbReference type="RefSeq" id="NP_636713.1">
    <property type="nucleotide sequence ID" value="NC_003902.1"/>
</dbReference>
<dbReference type="RefSeq" id="WP_011036531.1">
    <property type="nucleotide sequence ID" value="NC_003902.1"/>
</dbReference>
<dbReference type="SMR" id="Q8PAY7"/>
<dbReference type="STRING" id="190485.XCC1339"/>
<dbReference type="EnsemblBacteria" id="AAM40637">
    <property type="protein sequence ID" value="AAM40637"/>
    <property type="gene ID" value="XCC1339"/>
</dbReference>
<dbReference type="KEGG" id="xcc:XCC1339"/>
<dbReference type="PATRIC" id="fig|190485.4.peg.1438"/>
<dbReference type="eggNOG" id="COG0073">
    <property type="taxonomic scope" value="Bacteria"/>
</dbReference>
<dbReference type="eggNOG" id="COG0143">
    <property type="taxonomic scope" value="Bacteria"/>
</dbReference>
<dbReference type="HOGENOM" id="CLU_009710_7_0_6"/>
<dbReference type="OrthoDB" id="9810191at2"/>
<dbReference type="Proteomes" id="UP000001010">
    <property type="component" value="Chromosome"/>
</dbReference>
<dbReference type="GO" id="GO:0005829">
    <property type="term" value="C:cytosol"/>
    <property type="evidence" value="ECO:0000318"/>
    <property type="project" value="GO_Central"/>
</dbReference>
<dbReference type="GO" id="GO:0005524">
    <property type="term" value="F:ATP binding"/>
    <property type="evidence" value="ECO:0007669"/>
    <property type="project" value="UniProtKB-UniRule"/>
</dbReference>
<dbReference type="GO" id="GO:0046872">
    <property type="term" value="F:metal ion binding"/>
    <property type="evidence" value="ECO:0007669"/>
    <property type="project" value="UniProtKB-KW"/>
</dbReference>
<dbReference type="GO" id="GO:0004825">
    <property type="term" value="F:methionine-tRNA ligase activity"/>
    <property type="evidence" value="ECO:0000318"/>
    <property type="project" value="GO_Central"/>
</dbReference>
<dbReference type="GO" id="GO:0000049">
    <property type="term" value="F:tRNA binding"/>
    <property type="evidence" value="ECO:0007669"/>
    <property type="project" value="UniProtKB-KW"/>
</dbReference>
<dbReference type="GO" id="GO:0006431">
    <property type="term" value="P:methionyl-tRNA aminoacylation"/>
    <property type="evidence" value="ECO:0000318"/>
    <property type="project" value="GO_Central"/>
</dbReference>
<dbReference type="CDD" id="cd07957">
    <property type="entry name" value="Anticodon_Ia_Met"/>
    <property type="match status" value="1"/>
</dbReference>
<dbReference type="CDD" id="cd00814">
    <property type="entry name" value="MetRS_core"/>
    <property type="match status" value="1"/>
</dbReference>
<dbReference type="CDD" id="cd02800">
    <property type="entry name" value="tRNA_bind_EcMetRS_like"/>
    <property type="match status" value="1"/>
</dbReference>
<dbReference type="FunFam" id="1.10.730.10:FF:000005">
    <property type="entry name" value="Methionine--tRNA ligase"/>
    <property type="match status" value="1"/>
</dbReference>
<dbReference type="FunFam" id="2.20.28.20:FF:000001">
    <property type="entry name" value="Methionine--tRNA ligase"/>
    <property type="match status" value="1"/>
</dbReference>
<dbReference type="FunFam" id="2.40.50.140:FF:000042">
    <property type="entry name" value="Methionine--tRNA ligase"/>
    <property type="match status" value="1"/>
</dbReference>
<dbReference type="Gene3D" id="3.40.50.620">
    <property type="entry name" value="HUPs"/>
    <property type="match status" value="1"/>
</dbReference>
<dbReference type="Gene3D" id="1.10.730.10">
    <property type="entry name" value="Isoleucyl-tRNA Synthetase, Domain 1"/>
    <property type="match status" value="1"/>
</dbReference>
<dbReference type="Gene3D" id="2.20.28.20">
    <property type="entry name" value="Methionyl-tRNA synthetase, Zn-domain"/>
    <property type="match status" value="1"/>
</dbReference>
<dbReference type="Gene3D" id="2.40.50.140">
    <property type="entry name" value="Nucleic acid-binding proteins"/>
    <property type="match status" value="1"/>
</dbReference>
<dbReference type="HAMAP" id="MF_00098">
    <property type="entry name" value="Met_tRNA_synth_type1"/>
    <property type="match status" value="1"/>
</dbReference>
<dbReference type="InterPro" id="IPR001412">
    <property type="entry name" value="aa-tRNA-synth_I_CS"/>
</dbReference>
<dbReference type="InterPro" id="IPR041872">
    <property type="entry name" value="Anticodon_Met"/>
</dbReference>
<dbReference type="InterPro" id="IPR004495">
    <property type="entry name" value="Met-tRNA-synth_bsu_C"/>
</dbReference>
<dbReference type="InterPro" id="IPR023458">
    <property type="entry name" value="Met-tRNA_ligase_1"/>
</dbReference>
<dbReference type="InterPro" id="IPR014758">
    <property type="entry name" value="Met-tRNA_synth"/>
</dbReference>
<dbReference type="InterPro" id="IPR015413">
    <property type="entry name" value="Methionyl/Leucyl_tRNA_Synth"/>
</dbReference>
<dbReference type="InterPro" id="IPR033911">
    <property type="entry name" value="MetRS_core"/>
</dbReference>
<dbReference type="InterPro" id="IPR029038">
    <property type="entry name" value="MetRS_Zn"/>
</dbReference>
<dbReference type="InterPro" id="IPR012340">
    <property type="entry name" value="NA-bd_OB-fold"/>
</dbReference>
<dbReference type="InterPro" id="IPR014729">
    <property type="entry name" value="Rossmann-like_a/b/a_fold"/>
</dbReference>
<dbReference type="InterPro" id="IPR002547">
    <property type="entry name" value="tRNA-bd_dom"/>
</dbReference>
<dbReference type="InterPro" id="IPR009080">
    <property type="entry name" value="tRNAsynth_Ia_anticodon-bd"/>
</dbReference>
<dbReference type="NCBIfam" id="TIGR00398">
    <property type="entry name" value="metG"/>
    <property type="match status" value="1"/>
</dbReference>
<dbReference type="NCBIfam" id="TIGR00399">
    <property type="entry name" value="metG_C_term"/>
    <property type="match status" value="1"/>
</dbReference>
<dbReference type="NCBIfam" id="NF001100">
    <property type="entry name" value="PRK00133.1"/>
    <property type="match status" value="1"/>
</dbReference>
<dbReference type="PANTHER" id="PTHR45765">
    <property type="entry name" value="METHIONINE--TRNA LIGASE"/>
    <property type="match status" value="1"/>
</dbReference>
<dbReference type="PANTHER" id="PTHR45765:SF1">
    <property type="entry name" value="METHIONINE--TRNA LIGASE, CYTOPLASMIC"/>
    <property type="match status" value="1"/>
</dbReference>
<dbReference type="Pfam" id="PF19303">
    <property type="entry name" value="Anticodon_3"/>
    <property type="match status" value="1"/>
</dbReference>
<dbReference type="Pfam" id="PF09334">
    <property type="entry name" value="tRNA-synt_1g"/>
    <property type="match status" value="1"/>
</dbReference>
<dbReference type="Pfam" id="PF01588">
    <property type="entry name" value="tRNA_bind"/>
    <property type="match status" value="1"/>
</dbReference>
<dbReference type="PRINTS" id="PR01041">
    <property type="entry name" value="TRNASYNTHMET"/>
</dbReference>
<dbReference type="SUPFAM" id="SSF47323">
    <property type="entry name" value="Anticodon-binding domain of a subclass of class I aminoacyl-tRNA synthetases"/>
    <property type="match status" value="1"/>
</dbReference>
<dbReference type="SUPFAM" id="SSF57770">
    <property type="entry name" value="Methionyl-tRNA synthetase (MetRS), Zn-domain"/>
    <property type="match status" value="1"/>
</dbReference>
<dbReference type="SUPFAM" id="SSF50249">
    <property type="entry name" value="Nucleic acid-binding proteins"/>
    <property type="match status" value="1"/>
</dbReference>
<dbReference type="SUPFAM" id="SSF52374">
    <property type="entry name" value="Nucleotidylyl transferase"/>
    <property type="match status" value="1"/>
</dbReference>
<dbReference type="PROSITE" id="PS00178">
    <property type="entry name" value="AA_TRNA_LIGASE_I"/>
    <property type="match status" value="1"/>
</dbReference>
<dbReference type="PROSITE" id="PS50886">
    <property type="entry name" value="TRBD"/>
    <property type="match status" value="1"/>
</dbReference>
<protein>
    <recommendedName>
        <fullName evidence="1">Methionine--tRNA ligase</fullName>
        <ecNumber evidence="1">6.1.1.10</ecNumber>
    </recommendedName>
    <alternativeName>
        <fullName evidence="1">Methionyl-tRNA synthetase</fullName>
        <shortName evidence="1">MetRS</shortName>
    </alternativeName>
</protein>
<comment type="function">
    <text evidence="1">Is required not only for elongation of protein synthesis but also for the initiation of all mRNA translation through initiator tRNA(fMet) aminoacylation.</text>
</comment>
<comment type="catalytic activity">
    <reaction evidence="1">
        <text>tRNA(Met) + L-methionine + ATP = L-methionyl-tRNA(Met) + AMP + diphosphate</text>
        <dbReference type="Rhea" id="RHEA:13481"/>
        <dbReference type="Rhea" id="RHEA-COMP:9667"/>
        <dbReference type="Rhea" id="RHEA-COMP:9698"/>
        <dbReference type="ChEBI" id="CHEBI:30616"/>
        <dbReference type="ChEBI" id="CHEBI:33019"/>
        <dbReference type="ChEBI" id="CHEBI:57844"/>
        <dbReference type="ChEBI" id="CHEBI:78442"/>
        <dbReference type="ChEBI" id="CHEBI:78530"/>
        <dbReference type="ChEBI" id="CHEBI:456215"/>
        <dbReference type="EC" id="6.1.1.10"/>
    </reaction>
</comment>
<comment type="cofactor">
    <cofactor evidence="1">
        <name>Zn(2+)</name>
        <dbReference type="ChEBI" id="CHEBI:29105"/>
    </cofactor>
    <text evidence="1">Binds 1 zinc ion per subunit.</text>
</comment>
<comment type="subunit">
    <text evidence="1">Homodimer.</text>
</comment>
<comment type="subcellular location">
    <subcellularLocation>
        <location evidence="1">Cytoplasm</location>
    </subcellularLocation>
</comment>
<comment type="similarity">
    <text evidence="1">Belongs to the class-I aminoacyl-tRNA synthetase family. MetG type 1 subfamily.</text>
</comment>
<proteinExistence type="inferred from homology"/>
<sequence>MTRTALVTTALPYANGPLHLGHLVGYIQADIWVRARRLRGDKTWFVCADDTHGTPIMLAAEKAGVTPEAFIANIQASHERDFAAFGVTFDHYDSTNSPVNRELTEAFYTKLEAAGHISRRSVAQFYDPAKGMFLPDRYIKGICPNCGSADQYGDNCEVCGATYAPTELKEPKSVISGATPELRDSEHFFFEVGHFDGFLREWLDGDVALPGVKAKLKEWLDAEGGLRAWDISRDAPYFGFQIPGQPGKYFYVWLDAPIGYLCSFKTLCAQMGEDFQAHLAAGTQTELHHFIGKDIVNFHGLFWPAVLHGTGHRAPTRLHVNGYLMVDGAKMSKSRGTFVMARTFLDVGLEPEALRYYFAAKSSGGVDDLDLNLGDFVARVNADLVGKFVNLASRCAGFIGKRFDGKLADALPDPAQYARFVEALAPIREAYERNDPASAIRQTMALADEANKYIDDTKPWVIAKQEGADAQLQSVCTQGLNLFRLLVAALKPILPRTAAEAEAFLSAPMTSWEDVSRPLTCHVIQPYTALFTRIDPKLIDAMTDASKDTMAAPAAPAATTASAEKVAKIDAKAATPANPPASVANPGLIGMDDFAKLDLRIGKVLVCEAVEGSDKLLRFELDAGELGKRQIFSGIRASYGEPETLVGRSVVFIANLAPRKMRFGISEGMILSAGFDGGALALLDADAGAQPGMPVR</sequence>
<organism>
    <name type="scientific">Xanthomonas campestris pv. campestris (strain ATCC 33913 / DSM 3586 / NCPPB 528 / LMG 568 / P 25)</name>
    <dbReference type="NCBI Taxonomy" id="190485"/>
    <lineage>
        <taxon>Bacteria</taxon>
        <taxon>Pseudomonadati</taxon>
        <taxon>Pseudomonadota</taxon>
        <taxon>Gammaproteobacteria</taxon>
        <taxon>Lysobacterales</taxon>
        <taxon>Lysobacteraceae</taxon>
        <taxon>Xanthomonas</taxon>
    </lineage>
</organism>
<accession>Q8PAY7</accession>
<feature type="chain" id="PRO_0000139176" description="Methionine--tRNA ligase">
    <location>
        <begin position="1"/>
        <end position="696"/>
    </location>
</feature>
<feature type="domain" description="tRNA-binding" evidence="1">
    <location>
        <begin position="593"/>
        <end position="696"/>
    </location>
</feature>
<feature type="short sequence motif" description="'HIGH' region">
    <location>
        <begin position="12"/>
        <end position="22"/>
    </location>
</feature>
<feature type="short sequence motif" description="'KMSKS' region">
    <location>
        <begin position="330"/>
        <end position="334"/>
    </location>
</feature>
<feature type="binding site" evidence="1">
    <location>
        <position position="143"/>
    </location>
    <ligand>
        <name>Zn(2+)</name>
        <dbReference type="ChEBI" id="CHEBI:29105"/>
    </ligand>
</feature>
<feature type="binding site" evidence="1">
    <location>
        <position position="146"/>
    </location>
    <ligand>
        <name>Zn(2+)</name>
        <dbReference type="ChEBI" id="CHEBI:29105"/>
    </ligand>
</feature>
<feature type="binding site" evidence="1">
    <location>
        <position position="156"/>
    </location>
    <ligand>
        <name>Zn(2+)</name>
        <dbReference type="ChEBI" id="CHEBI:29105"/>
    </ligand>
</feature>
<feature type="binding site" evidence="1">
    <location>
        <position position="159"/>
    </location>
    <ligand>
        <name>Zn(2+)</name>
        <dbReference type="ChEBI" id="CHEBI:29105"/>
    </ligand>
</feature>
<feature type="binding site" evidence="1">
    <location>
        <position position="333"/>
    </location>
    <ligand>
        <name>ATP</name>
        <dbReference type="ChEBI" id="CHEBI:30616"/>
    </ligand>
</feature>
<gene>
    <name evidence="1" type="primary">metG</name>
    <name type="synonym">metS</name>
    <name type="ordered locus">XCC1339</name>
</gene>
<name>SYM_XANCP</name>